<feature type="chain" id="PRO_1000024632" description="ATP-dependent Clp protease ATP-binding subunit ClpX">
    <location>
        <begin position="1"/>
        <end position="421"/>
    </location>
</feature>
<feature type="domain" description="ClpX-type ZB" evidence="2">
    <location>
        <begin position="3"/>
        <end position="56"/>
    </location>
</feature>
<feature type="binding site" evidence="2">
    <location>
        <position position="15"/>
    </location>
    <ligand>
        <name>Zn(2+)</name>
        <dbReference type="ChEBI" id="CHEBI:29105"/>
    </ligand>
</feature>
<feature type="binding site" evidence="2">
    <location>
        <position position="18"/>
    </location>
    <ligand>
        <name>Zn(2+)</name>
        <dbReference type="ChEBI" id="CHEBI:29105"/>
    </ligand>
</feature>
<feature type="binding site" evidence="2">
    <location>
        <position position="37"/>
    </location>
    <ligand>
        <name>Zn(2+)</name>
        <dbReference type="ChEBI" id="CHEBI:29105"/>
    </ligand>
</feature>
<feature type="binding site" evidence="2">
    <location>
        <position position="40"/>
    </location>
    <ligand>
        <name>Zn(2+)</name>
        <dbReference type="ChEBI" id="CHEBI:29105"/>
    </ligand>
</feature>
<feature type="binding site" evidence="1">
    <location>
        <begin position="123"/>
        <end position="130"/>
    </location>
    <ligand>
        <name>ATP</name>
        <dbReference type="ChEBI" id="CHEBI:30616"/>
    </ligand>
</feature>
<evidence type="ECO:0000255" key="1">
    <source>
        <dbReference type="HAMAP-Rule" id="MF_00175"/>
    </source>
</evidence>
<evidence type="ECO:0000255" key="2">
    <source>
        <dbReference type="PROSITE-ProRule" id="PRU01250"/>
    </source>
</evidence>
<comment type="function">
    <text evidence="1">ATP-dependent specificity component of the Clp protease. It directs the protease to specific substrates. Can perform chaperone functions in the absence of ClpP.</text>
</comment>
<comment type="subunit">
    <text evidence="1">Component of the ClpX-ClpP complex. Forms a hexameric ring that, in the presence of ATP, binds to fourteen ClpP subunits assembled into a disk-like structure with a central cavity, resembling the structure of eukaryotic proteasomes.</text>
</comment>
<comment type="similarity">
    <text evidence="1">Belongs to the ClpX chaperone family.</text>
</comment>
<keyword id="KW-0067">ATP-binding</keyword>
<keyword id="KW-0143">Chaperone</keyword>
<keyword id="KW-0479">Metal-binding</keyword>
<keyword id="KW-0547">Nucleotide-binding</keyword>
<keyword id="KW-1185">Reference proteome</keyword>
<keyword id="KW-0862">Zinc</keyword>
<name>CLPX_ALBFT</name>
<sequence>MAEKKGSSGEKTLYCSFCGKSQHEVKKLIAGPSVFVCDECIDLCNEIIRDELPPSTEARGDSSELPTPLEIKTNLDNYVIGQEPAKRTLAVAVYNHYKRLRHQEKAKKDDVELAKSNILLIGPTGSGKTLLAQTLARMLDVPFVMADATTLTEAGYVGEDVENIVLKLLQSCNYEVERAQRGIVYIDEIDKISRKSDNPSITRDVSGEGVQQALLKLIEGTMASVPPQGGRKHPNQDFVQVDTTNILFICGGAFSGLEKVIDNRTQSSGMGFGATVKSKEQRSLTEVFKEVEPEDLIKFGLIPELVGRMPVLATLAELSEDALVQILTEPKNALVKQYSKLLAMEGVDLEIRPSALKAIAKKALARKTGARGLRSILEQSLIDTMFDLPNTSNVDKVVVDESTIDENKPPLLVYREVAKKA</sequence>
<gene>
    <name evidence="1" type="primary">clpX</name>
    <name type="ordered locus">Rfer_1555</name>
</gene>
<protein>
    <recommendedName>
        <fullName evidence="1">ATP-dependent Clp protease ATP-binding subunit ClpX</fullName>
    </recommendedName>
</protein>
<dbReference type="EMBL" id="CP000267">
    <property type="protein sequence ID" value="ABD69287.1"/>
    <property type="molecule type" value="Genomic_DNA"/>
</dbReference>
<dbReference type="RefSeq" id="WP_011463855.1">
    <property type="nucleotide sequence ID" value="NC_007908.1"/>
</dbReference>
<dbReference type="SMR" id="Q21Y66"/>
<dbReference type="STRING" id="338969.Rfer_1555"/>
<dbReference type="KEGG" id="rfr:Rfer_1555"/>
<dbReference type="eggNOG" id="COG1219">
    <property type="taxonomic scope" value="Bacteria"/>
</dbReference>
<dbReference type="HOGENOM" id="CLU_014218_8_2_4"/>
<dbReference type="OrthoDB" id="9804062at2"/>
<dbReference type="Proteomes" id="UP000008332">
    <property type="component" value="Chromosome"/>
</dbReference>
<dbReference type="GO" id="GO:0009376">
    <property type="term" value="C:HslUV protease complex"/>
    <property type="evidence" value="ECO:0007669"/>
    <property type="project" value="TreeGrafter"/>
</dbReference>
<dbReference type="GO" id="GO:0005524">
    <property type="term" value="F:ATP binding"/>
    <property type="evidence" value="ECO:0007669"/>
    <property type="project" value="UniProtKB-UniRule"/>
</dbReference>
<dbReference type="GO" id="GO:0016887">
    <property type="term" value="F:ATP hydrolysis activity"/>
    <property type="evidence" value="ECO:0007669"/>
    <property type="project" value="InterPro"/>
</dbReference>
<dbReference type="GO" id="GO:0140662">
    <property type="term" value="F:ATP-dependent protein folding chaperone"/>
    <property type="evidence" value="ECO:0007669"/>
    <property type="project" value="InterPro"/>
</dbReference>
<dbReference type="GO" id="GO:0046983">
    <property type="term" value="F:protein dimerization activity"/>
    <property type="evidence" value="ECO:0007669"/>
    <property type="project" value="InterPro"/>
</dbReference>
<dbReference type="GO" id="GO:0051082">
    <property type="term" value="F:unfolded protein binding"/>
    <property type="evidence" value="ECO:0007669"/>
    <property type="project" value="UniProtKB-UniRule"/>
</dbReference>
<dbReference type="GO" id="GO:0008270">
    <property type="term" value="F:zinc ion binding"/>
    <property type="evidence" value="ECO:0007669"/>
    <property type="project" value="InterPro"/>
</dbReference>
<dbReference type="GO" id="GO:0051301">
    <property type="term" value="P:cell division"/>
    <property type="evidence" value="ECO:0007669"/>
    <property type="project" value="TreeGrafter"/>
</dbReference>
<dbReference type="GO" id="GO:0051603">
    <property type="term" value="P:proteolysis involved in protein catabolic process"/>
    <property type="evidence" value="ECO:0007669"/>
    <property type="project" value="TreeGrafter"/>
</dbReference>
<dbReference type="CDD" id="cd19497">
    <property type="entry name" value="RecA-like_ClpX"/>
    <property type="match status" value="1"/>
</dbReference>
<dbReference type="FunFam" id="1.10.8.60:FF:000002">
    <property type="entry name" value="ATP-dependent Clp protease ATP-binding subunit ClpX"/>
    <property type="match status" value="1"/>
</dbReference>
<dbReference type="FunFam" id="3.40.50.300:FF:000005">
    <property type="entry name" value="ATP-dependent Clp protease ATP-binding subunit ClpX"/>
    <property type="match status" value="1"/>
</dbReference>
<dbReference type="Gene3D" id="1.10.8.60">
    <property type="match status" value="1"/>
</dbReference>
<dbReference type="Gene3D" id="6.20.220.10">
    <property type="entry name" value="ClpX chaperone, C4-type zinc finger domain"/>
    <property type="match status" value="1"/>
</dbReference>
<dbReference type="Gene3D" id="3.40.50.300">
    <property type="entry name" value="P-loop containing nucleotide triphosphate hydrolases"/>
    <property type="match status" value="1"/>
</dbReference>
<dbReference type="HAMAP" id="MF_00175">
    <property type="entry name" value="ClpX"/>
    <property type="match status" value="1"/>
</dbReference>
<dbReference type="InterPro" id="IPR003593">
    <property type="entry name" value="AAA+_ATPase"/>
</dbReference>
<dbReference type="InterPro" id="IPR050052">
    <property type="entry name" value="ATP-dep_Clp_protease_ClpX"/>
</dbReference>
<dbReference type="InterPro" id="IPR003959">
    <property type="entry name" value="ATPase_AAA_core"/>
</dbReference>
<dbReference type="InterPro" id="IPR019489">
    <property type="entry name" value="Clp_ATPase_C"/>
</dbReference>
<dbReference type="InterPro" id="IPR004487">
    <property type="entry name" value="Clp_protease_ATP-bd_su_ClpX"/>
</dbReference>
<dbReference type="InterPro" id="IPR046425">
    <property type="entry name" value="ClpX_bact"/>
</dbReference>
<dbReference type="InterPro" id="IPR027417">
    <property type="entry name" value="P-loop_NTPase"/>
</dbReference>
<dbReference type="InterPro" id="IPR010603">
    <property type="entry name" value="Znf_CppX_C4"/>
</dbReference>
<dbReference type="InterPro" id="IPR038366">
    <property type="entry name" value="Znf_CppX_C4_sf"/>
</dbReference>
<dbReference type="NCBIfam" id="TIGR00382">
    <property type="entry name" value="clpX"/>
    <property type="match status" value="1"/>
</dbReference>
<dbReference type="NCBIfam" id="NF003745">
    <property type="entry name" value="PRK05342.1"/>
    <property type="match status" value="1"/>
</dbReference>
<dbReference type="PANTHER" id="PTHR48102:SF7">
    <property type="entry name" value="ATP-DEPENDENT CLP PROTEASE ATP-BINDING SUBUNIT CLPX-LIKE, MITOCHONDRIAL"/>
    <property type="match status" value="1"/>
</dbReference>
<dbReference type="PANTHER" id="PTHR48102">
    <property type="entry name" value="ATP-DEPENDENT CLP PROTEASE ATP-BINDING SUBUNIT CLPX-LIKE, MITOCHONDRIAL-RELATED"/>
    <property type="match status" value="1"/>
</dbReference>
<dbReference type="Pfam" id="PF07724">
    <property type="entry name" value="AAA_2"/>
    <property type="match status" value="1"/>
</dbReference>
<dbReference type="Pfam" id="PF10431">
    <property type="entry name" value="ClpB_D2-small"/>
    <property type="match status" value="1"/>
</dbReference>
<dbReference type="Pfam" id="PF06689">
    <property type="entry name" value="zf-C4_ClpX"/>
    <property type="match status" value="1"/>
</dbReference>
<dbReference type="SMART" id="SM00382">
    <property type="entry name" value="AAA"/>
    <property type="match status" value="1"/>
</dbReference>
<dbReference type="SMART" id="SM01086">
    <property type="entry name" value="ClpB_D2-small"/>
    <property type="match status" value="1"/>
</dbReference>
<dbReference type="SMART" id="SM00994">
    <property type="entry name" value="zf-C4_ClpX"/>
    <property type="match status" value="1"/>
</dbReference>
<dbReference type="SUPFAM" id="SSF57716">
    <property type="entry name" value="Glucocorticoid receptor-like (DNA-binding domain)"/>
    <property type="match status" value="1"/>
</dbReference>
<dbReference type="SUPFAM" id="SSF52540">
    <property type="entry name" value="P-loop containing nucleoside triphosphate hydrolases"/>
    <property type="match status" value="1"/>
</dbReference>
<dbReference type="PROSITE" id="PS51902">
    <property type="entry name" value="CLPX_ZB"/>
    <property type="match status" value="1"/>
</dbReference>
<accession>Q21Y66</accession>
<proteinExistence type="inferred from homology"/>
<organism>
    <name type="scientific">Albidiferax ferrireducens (strain ATCC BAA-621 / DSM 15236 / T118)</name>
    <name type="common">Rhodoferax ferrireducens</name>
    <dbReference type="NCBI Taxonomy" id="338969"/>
    <lineage>
        <taxon>Bacteria</taxon>
        <taxon>Pseudomonadati</taxon>
        <taxon>Pseudomonadota</taxon>
        <taxon>Betaproteobacteria</taxon>
        <taxon>Burkholderiales</taxon>
        <taxon>Comamonadaceae</taxon>
        <taxon>Rhodoferax</taxon>
    </lineage>
</organism>
<reference key="1">
    <citation type="submission" date="2006-02" db="EMBL/GenBank/DDBJ databases">
        <title>Complete sequence of chromosome of Rhodoferax ferrireducens DSM 15236.</title>
        <authorList>
            <person name="Copeland A."/>
            <person name="Lucas S."/>
            <person name="Lapidus A."/>
            <person name="Barry K."/>
            <person name="Detter J.C."/>
            <person name="Glavina del Rio T."/>
            <person name="Hammon N."/>
            <person name="Israni S."/>
            <person name="Pitluck S."/>
            <person name="Brettin T."/>
            <person name="Bruce D."/>
            <person name="Han C."/>
            <person name="Tapia R."/>
            <person name="Gilna P."/>
            <person name="Kiss H."/>
            <person name="Schmutz J."/>
            <person name="Larimer F."/>
            <person name="Land M."/>
            <person name="Kyrpides N."/>
            <person name="Ivanova N."/>
            <person name="Richardson P."/>
        </authorList>
    </citation>
    <scope>NUCLEOTIDE SEQUENCE [LARGE SCALE GENOMIC DNA]</scope>
    <source>
        <strain>ATCC BAA-621 / DSM 15236 / T118</strain>
    </source>
</reference>